<feature type="chain" id="PRO_0000456340" description="Zorya protein ZorB">
    <location>
        <begin position="1"/>
        <end position="246"/>
    </location>
</feature>
<feature type="transmembrane region" description="Helical" evidence="1">
    <location>
        <begin position="20"/>
        <end position="40"/>
    </location>
</feature>
<feature type="domain" description="OmpA-like" evidence="2">
    <location>
        <begin position="86"/>
        <end position="218"/>
    </location>
</feature>
<feature type="mutagenesis site" description="No longer resistant to SECphi27." evidence="3">
    <original>D</original>
    <variation>N</variation>
    <location>
        <position position="26"/>
    </location>
</feature>
<feature type="helix" evidence="9">
    <location>
        <begin position="20"/>
        <end position="78"/>
    </location>
</feature>
<feature type="strand" evidence="9">
    <location>
        <begin position="82"/>
        <end position="85"/>
    </location>
</feature>
<feature type="turn" evidence="9">
    <location>
        <begin position="86"/>
        <end position="89"/>
    </location>
</feature>
<feature type="strand" evidence="9">
    <location>
        <begin position="90"/>
        <end position="95"/>
    </location>
</feature>
<feature type="helix" evidence="9">
    <location>
        <begin position="108"/>
        <end position="126"/>
    </location>
</feature>
<feature type="helix" evidence="9">
    <location>
        <begin position="128"/>
        <end position="133"/>
    </location>
</feature>
<feature type="strand" evidence="9">
    <location>
        <begin position="134"/>
        <end position="142"/>
    </location>
</feature>
<feature type="strand" evidence="9">
    <location>
        <begin position="145"/>
        <end position="147"/>
    </location>
</feature>
<feature type="helix" evidence="9">
    <location>
        <begin position="149"/>
        <end position="168"/>
    </location>
</feature>
<feature type="strand" evidence="9">
    <location>
        <begin position="170"/>
        <end position="172"/>
    </location>
</feature>
<feature type="helix" evidence="9">
    <location>
        <begin position="173"/>
        <end position="177"/>
    </location>
</feature>
<feature type="helix" evidence="9">
    <location>
        <begin position="180"/>
        <end position="189"/>
    </location>
</feature>
<feature type="strand" evidence="8">
    <location>
        <begin position="194"/>
        <end position="196"/>
    </location>
</feature>
<feature type="helix" evidence="9">
    <location>
        <begin position="204"/>
        <end position="207"/>
    </location>
</feature>
<feature type="strand" evidence="9">
    <location>
        <begin position="208"/>
        <end position="216"/>
    </location>
</feature>
<feature type="turn" evidence="9">
    <location>
        <begin position="225"/>
        <end position="227"/>
    </location>
</feature>
<gene>
    <name evidence="4" type="primary">zorB</name>
    <name evidence="7" type="ordered locus">EcE24377A_0284</name>
</gene>
<name>ZORB_ECO24</name>
<evidence type="ECO:0000255" key="1"/>
<evidence type="ECO:0000255" key="2">
    <source>
        <dbReference type="PROSITE-ProRule" id="PRU00473"/>
    </source>
</evidence>
<evidence type="ECO:0000269" key="3">
    <source>
    </source>
</evidence>
<evidence type="ECO:0000303" key="4">
    <source>
    </source>
</evidence>
<evidence type="ECO:0000305" key="5"/>
<evidence type="ECO:0000305" key="6">
    <source>
    </source>
</evidence>
<evidence type="ECO:0000312" key="7">
    <source>
        <dbReference type="EMBL" id="ABV17786.1"/>
    </source>
</evidence>
<evidence type="ECO:0007829" key="8">
    <source>
        <dbReference type="PDB" id="8QYH"/>
    </source>
</evidence>
<evidence type="ECO:0007829" key="9">
    <source>
        <dbReference type="PDB" id="8QYK"/>
    </source>
</evidence>
<protein>
    <recommendedName>
        <fullName evidence="4">Zorya protein ZorB</fullName>
    </recommendedName>
</protein>
<sequence>MFGNAFGVKKRRSDEAEKPFWISYADLMTAMMVLFLVVMVASLSSVTQRIQRAEQGEKTRGQDISRLCERLELHARNVNKTIVVDCHDNRISFGEAGRFDHNQFFLNAEGQKALQDVVPLVLEASNSEEGKKWFKQIVIEGFTDTDGSYLYNLHLSLQRSEWVMCSLLDSRSPLQKNISAEQQLQIRKLFLAGGVSFNNAKESKEASRRVELRMQFFGLKDKRDKADEVDFPPVVNKEVCQLVMPL</sequence>
<reference evidence="7" key="1">
    <citation type="journal article" date="2008" name="J. Bacteriol.">
        <title>The pangenome structure of Escherichia coli: comparative genomic analysis of E. coli commensal and pathogenic isolates.</title>
        <authorList>
            <person name="Rasko D.A."/>
            <person name="Rosovitz M.J."/>
            <person name="Myers G.S.A."/>
            <person name="Mongodin E.F."/>
            <person name="Fricke W.F."/>
            <person name="Gajer P."/>
            <person name="Crabtree J."/>
            <person name="Sebaihia M."/>
            <person name="Thomson N.R."/>
            <person name="Chaudhuri R."/>
            <person name="Henderson I.R."/>
            <person name="Sperandio V."/>
            <person name="Ravel J."/>
        </authorList>
    </citation>
    <scope>NUCLEOTIDE SEQUENCE [LARGE SCALE GENOMIC DNA]</scope>
    <source>
        <strain>E24377A / ETEC</strain>
    </source>
</reference>
<reference key="2">
    <citation type="journal article" date="2018" name="Science">
        <title>Systematic discovery of antiphage defense systems in the microbial pangenome.</title>
        <authorList>
            <person name="Doron S."/>
            <person name="Melamed S."/>
            <person name="Ofir G."/>
            <person name="Leavitt A."/>
            <person name="Lopatina A."/>
            <person name="Keren M."/>
            <person name="Amitai G."/>
            <person name="Sorek R."/>
        </authorList>
    </citation>
    <scope>FUNCTION</scope>
    <scope>SUBCELLULAR LOCATION</scope>
    <scope>DISRUPTION PHENOTYPE</scope>
    <scope>MUTAGENESIS OF ASP-26</scope>
    <source>
        <strain>E24377A / ETEC</strain>
    </source>
</reference>
<organism>
    <name type="scientific">Escherichia coli O139:H28 (strain E24377A / ETEC)</name>
    <dbReference type="NCBI Taxonomy" id="331111"/>
    <lineage>
        <taxon>Bacteria</taxon>
        <taxon>Pseudomonadati</taxon>
        <taxon>Pseudomonadota</taxon>
        <taxon>Gammaproteobacteria</taxon>
        <taxon>Enterobacterales</taxon>
        <taxon>Enterobacteriaceae</taxon>
        <taxon>Escherichia</taxon>
    </lineage>
</organism>
<proteinExistence type="evidence at protein level"/>
<keyword id="KW-0002">3D-structure</keyword>
<keyword id="KW-0051">Antiviral defense</keyword>
<keyword id="KW-0997">Cell inner membrane</keyword>
<keyword id="KW-1003">Cell membrane</keyword>
<keyword id="KW-0472">Membrane</keyword>
<keyword id="KW-1185">Reference proteome</keyword>
<keyword id="KW-0812">Transmembrane</keyword>
<keyword id="KW-1133">Transmembrane helix</keyword>
<comment type="function">
    <text evidence="3 6">Component of antiviral defense system Zorya type I, composed of ZorA, ZorB, ZorC and ZorD. Expression of Zorya type I in E.coli (strain MG1655) confers 10,000-fold resistance to phage SECphi27, 100-fold resistance to lambda, and 10-fold resistance to T7. While most T7 infected Zorya-containing cells undergo abortive infection, a minority produce viable phage progeny. These eventually accumulate to a high multiplicity of infection, leading to culture collapse by 2 hours after initial infection (PubMed:29371424). ZorA and ZorB probably assemble in the cell inner membrane and exert their effect there (Probable).</text>
</comment>
<comment type="subcellular location">
    <subcellularLocation>
        <location evidence="6">Cell inner membrane</location>
        <topology evidence="1">Single-pass membrane protein</topology>
    </subcellularLocation>
</comment>
<comment type="disruption phenotype">
    <text evidence="3">When this gene is missing the Zorya system does not confer resistance to SECphi27 in E.coli.</text>
</comment>
<comment type="similarity">
    <text evidence="5">Belongs to the MotB family.</text>
</comment>
<accession>A7ZI09</accession>
<dbReference type="EMBL" id="CP000800">
    <property type="protein sequence ID" value="ABV17786.1"/>
    <property type="molecule type" value="Genomic_DNA"/>
</dbReference>
<dbReference type="PDB" id="8QYD">
    <property type="method" value="EM"/>
    <property type="resolution" value="2.67 A"/>
    <property type="chains" value="F/G=1-246"/>
</dbReference>
<dbReference type="PDB" id="8QYH">
    <property type="method" value="EM"/>
    <property type="resolution" value="2.40 A"/>
    <property type="chains" value="F/G=1-246"/>
</dbReference>
<dbReference type="PDB" id="8QYK">
    <property type="method" value="EM"/>
    <property type="resolution" value="2.07 A"/>
    <property type="chains" value="F/G=1-246"/>
</dbReference>
<dbReference type="PDB" id="8QYY">
    <property type="method" value="EM"/>
    <property type="resolution" value="2.56 A"/>
    <property type="chains" value="F/G=1-246"/>
</dbReference>
<dbReference type="PDBsum" id="8QYD"/>
<dbReference type="PDBsum" id="8QYH"/>
<dbReference type="PDBsum" id="8QYK"/>
<dbReference type="PDBsum" id="8QYY"/>
<dbReference type="SMR" id="A7ZI09"/>
<dbReference type="KEGG" id="ecw:EcE24377A_0284"/>
<dbReference type="HOGENOM" id="CLU_016890_2_2_6"/>
<dbReference type="Proteomes" id="UP000001122">
    <property type="component" value="Chromosome"/>
</dbReference>
<dbReference type="GO" id="GO:0005886">
    <property type="term" value="C:plasma membrane"/>
    <property type="evidence" value="ECO:0007669"/>
    <property type="project" value="UniProtKB-SubCell"/>
</dbReference>
<dbReference type="GO" id="GO:0051607">
    <property type="term" value="P:defense response to virus"/>
    <property type="evidence" value="ECO:0007669"/>
    <property type="project" value="UniProtKB-KW"/>
</dbReference>
<dbReference type="Gene3D" id="3.30.1330.60">
    <property type="entry name" value="OmpA-like domain"/>
    <property type="match status" value="1"/>
</dbReference>
<dbReference type="InterPro" id="IPR050330">
    <property type="entry name" value="Bact_OuterMem_StrucFunc"/>
</dbReference>
<dbReference type="InterPro" id="IPR025713">
    <property type="entry name" value="MotB-like_N_dom"/>
</dbReference>
<dbReference type="InterPro" id="IPR006665">
    <property type="entry name" value="OmpA-like"/>
</dbReference>
<dbReference type="InterPro" id="IPR036737">
    <property type="entry name" value="OmpA-like_sf"/>
</dbReference>
<dbReference type="InterPro" id="IPR049658">
    <property type="entry name" value="ZorB-like_t1"/>
</dbReference>
<dbReference type="NCBIfam" id="NF041788">
    <property type="entry name" value="anti-phage_ZorB1"/>
    <property type="match status" value="1"/>
</dbReference>
<dbReference type="PANTHER" id="PTHR30329:SF21">
    <property type="entry name" value="LIPOPROTEIN YIAD-RELATED"/>
    <property type="match status" value="1"/>
</dbReference>
<dbReference type="PANTHER" id="PTHR30329">
    <property type="entry name" value="STATOR ELEMENT OF FLAGELLAR MOTOR COMPLEX"/>
    <property type="match status" value="1"/>
</dbReference>
<dbReference type="Pfam" id="PF13677">
    <property type="entry name" value="MotB_plug"/>
    <property type="match status" value="1"/>
</dbReference>
<dbReference type="SUPFAM" id="SSF103088">
    <property type="entry name" value="OmpA-like"/>
    <property type="match status" value="1"/>
</dbReference>
<dbReference type="PROSITE" id="PS51123">
    <property type="entry name" value="OMPA_2"/>
    <property type="match status" value="1"/>
</dbReference>